<keyword id="KW-0013">ADP-ribosylation</keyword>
<keyword id="KW-1040">Host Golgi apparatus</keyword>
<keyword id="KW-1048">Host nucleus</keyword>
<keyword id="KW-0597">Phosphoprotein</keyword>
<keyword id="KW-0687">Ribonucleoprotein</keyword>
<keyword id="KW-0694">RNA-binding</keyword>
<keyword id="KW-0804">Transcription</keyword>
<keyword id="KW-0805">Transcription regulation</keyword>
<keyword id="KW-0543">Viral nucleoprotein</keyword>
<keyword id="KW-0946">Virion</keyword>
<sequence length="382" mass="43483">MANQGQRVSWGDESTKIRGRSNSRGRKSNNIPLSFFNPITLQQGSKFWNLCPRDFVPKGIGNRDQQIGYWNRQTRYRMVKGQRKELPERWFFYYLGTGPHADAKFKDKLDGVVWVAKDGAMNKPTTLGSRGANNESKALKFDGKVPGEFQLEVNQSRDNSRSRSQSRSRSRNRSQSRGRQQSNNKKDDSVEQAVLAALKKLGVDTEKQQQRSCSKSKERSNSKTRDTTPKNENKHTWKRTAGKGDVTRFYGARSSSANFGDSDLVANGSSAKHYPQLAECVPSVSSILFGSYWTSKEDGDQIEVTFTHKYHLPKDDPKTEQFLQQINAYARPSEVAKEQRKRKSRSKSAERSEQEVVPDALIENYTDVFDDTQVEMIDEVTN</sequence>
<proteinExistence type="evidence at protein level"/>
<protein>
    <recommendedName>
        <fullName evidence="1">Nucleoprotein</fullName>
    </recommendedName>
    <alternativeName>
        <fullName evidence="1">Nucleocapsid protein</fullName>
        <shortName evidence="1">NC</shortName>
        <shortName evidence="1">Protein N</shortName>
    </alternativeName>
</protein>
<dbReference type="EMBL" id="Y00542">
    <property type="protein sequence ID" value="CAA68607.1"/>
    <property type="molecule type" value="Genomic_RNA"/>
</dbReference>
<dbReference type="PIR" id="S03762">
    <property type="entry name" value="S03762"/>
</dbReference>
<dbReference type="SMR" id="P05991"/>
<dbReference type="IntAct" id="P05991">
    <property type="interactions" value="3"/>
</dbReference>
<dbReference type="GO" id="GO:0044172">
    <property type="term" value="C:host cell endoplasmic reticulum-Golgi intermediate compartment"/>
    <property type="evidence" value="ECO:0007669"/>
    <property type="project" value="UniProtKB-SubCell"/>
</dbReference>
<dbReference type="GO" id="GO:0044177">
    <property type="term" value="C:host cell Golgi apparatus"/>
    <property type="evidence" value="ECO:0007669"/>
    <property type="project" value="UniProtKB-SubCell"/>
</dbReference>
<dbReference type="GO" id="GO:0044196">
    <property type="term" value="C:host cell nucleolus"/>
    <property type="evidence" value="ECO:0007669"/>
    <property type="project" value="UniProtKB-SubCell"/>
</dbReference>
<dbReference type="GO" id="GO:1990904">
    <property type="term" value="C:ribonucleoprotein complex"/>
    <property type="evidence" value="ECO:0007669"/>
    <property type="project" value="UniProtKB-KW"/>
</dbReference>
<dbReference type="GO" id="GO:0019013">
    <property type="term" value="C:viral nucleocapsid"/>
    <property type="evidence" value="ECO:0007669"/>
    <property type="project" value="UniProtKB-KW"/>
</dbReference>
<dbReference type="GO" id="GO:0003723">
    <property type="term" value="F:RNA binding"/>
    <property type="evidence" value="ECO:0007669"/>
    <property type="project" value="UniProtKB-KW"/>
</dbReference>
<dbReference type="CDD" id="cd21595">
    <property type="entry name" value="CoV_N-CTD"/>
    <property type="match status" value="1"/>
</dbReference>
<dbReference type="CDD" id="cd21554">
    <property type="entry name" value="CoV_N-NTD"/>
    <property type="match status" value="1"/>
</dbReference>
<dbReference type="HAMAP" id="MF_04095">
    <property type="entry name" value="ALPHA_CORONA_NCAP"/>
    <property type="match status" value="1"/>
</dbReference>
<dbReference type="InterPro" id="IPR044344">
    <property type="entry name" value="N_prot_C_CoV"/>
</dbReference>
<dbReference type="InterPro" id="IPR044345">
    <property type="entry name" value="N_prot_N_CoV"/>
</dbReference>
<dbReference type="InterPro" id="IPR042548">
    <property type="entry name" value="NCAP_aCoV"/>
</dbReference>
<dbReference type="InterPro" id="IPR001218">
    <property type="entry name" value="Nucleocap_CoV"/>
</dbReference>
<dbReference type="InterPro" id="IPR037179">
    <property type="entry name" value="Nucleocapsid_C"/>
</dbReference>
<dbReference type="InterPro" id="IPR037195">
    <property type="entry name" value="Nucleocapsid_N"/>
</dbReference>
<dbReference type="Pfam" id="PF00937">
    <property type="entry name" value="CoV_nucleocap"/>
    <property type="match status" value="1"/>
</dbReference>
<dbReference type="PIRSF" id="PIRSF003888">
    <property type="entry name" value="Corona_nucleocap"/>
    <property type="match status" value="1"/>
</dbReference>
<dbReference type="SUPFAM" id="SSF110304">
    <property type="entry name" value="Coronavirus RNA-binding domain"/>
    <property type="match status" value="1"/>
</dbReference>
<dbReference type="SUPFAM" id="SSF103068">
    <property type="entry name" value="Nucleocapsid protein dimerization domain"/>
    <property type="match status" value="1"/>
</dbReference>
<dbReference type="PROSITE" id="PS51929">
    <property type="entry name" value="COV_N_CTD"/>
    <property type="match status" value="1"/>
</dbReference>
<dbReference type="PROSITE" id="PS51928">
    <property type="entry name" value="COV_N_NTD"/>
    <property type="match status" value="1"/>
</dbReference>
<accession>P05991</accession>
<evidence type="ECO:0000255" key="1">
    <source>
        <dbReference type="HAMAP-Rule" id="MF_04095"/>
    </source>
</evidence>
<evidence type="ECO:0000255" key="2">
    <source>
        <dbReference type="PROSITE-ProRule" id="PRU01276"/>
    </source>
</evidence>
<evidence type="ECO:0000255" key="3">
    <source>
        <dbReference type="PROSITE-ProRule" id="PRU01277"/>
    </source>
</evidence>
<evidence type="ECO:0000256" key="4">
    <source>
        <dbReference type="SAM" id="MobiDB-lite"/>
    </source>
</evidence>
<evidence type="ECO:0000269" key="5">
    <source>
    </source>
</evidence>
<gene>
    <name evidence="1" type="primary">N</name>
    <name type="ORF">6</name>
</gene>
<comment type="function">
    <text evidence="1">Packages the positive strand viral genome RNA into a helical ribonucleocapsid (RNP) and plays a fundamental role during virion assembly through its interactions with the viral genome and membrane protein M. Plays an important role in enhancing the efficiency of subgenomic viral RNA transcription as well as viral replication.</text>
</comment>
<comment type="subunit">
    <text evidence="1">Homooligomer. Both monomeric and oligomeric forms interact with RNA. Interacts with protein M. Interacts with NSP3; this interaction serves to tether the genome to the newly translated replicase-transcriptase complex at a very early stage of infection.</text>
</comment>
<comment type="interaction">
    <interactant intactId="EBI-25636086">
        <id>P05991</id>
    </interactant>
    <interactant intactId="EBI-25636029">
        <id>P02543</id>
        <label>VIM</label>
    </interactant>
    <organismsDiffer>true</organismsDiffer>
    <experiments>4</experiments>
</comment>
<comment type="subcellular location">
    <subcellularLocation>
        <location evidence="1">Virion</location>
    </subcellularLocation>
    <subcellularLocation>
        <location evidence="1">Host endoplasmic reticulum-Golgi intermediate compartment</location>
    </subcellularLocation>
    <subcellularLocation>
        <location evidence="1">Host Golgi apparatus</location>
    </subcellularLocation>
    <subcellularLocation>
        <location evidence="5">Host nucleus</location>
        <location evidence="5">Host nucleolus</location>
    </subcellularLocation>
    <text evidence="1">Located inside the virion, complexed with the viral RNA. Probably associates with ER-derived membranes where it participates in viral RNA synthesis and virus budding.</text>
</comment>
<comment type="PTM">
    <text evidence="1">ADP-ribosylated. The ADP-ribosylation is retained in the virion during infection.</text>
</comment>
<comment type="PTM">
    <text evidence="1">Phosphorylated on serine and threonine residues.</text>
</comment>
<comment type="similarity">
    <text evidence="1">Belongs to the alphacoronavirus nucleocapsid protein family.</text>
</comment>
<organismHost>
    <name type="scientific">Sus scrofa</name>
    <name type="common">Pig</name>
    <dbReference type="NCBI Taxonomy" id="9823"/>
</organismHost>
<name>NCAP_CVPFS</name>
<organism>
    <name type="scientific">Porcine transmissible gastroenteritis coronavirus (strain FS772/70)</name>
    <name type="common">TGEV</name>
    <dbReference type="NCBI Taxonomy" id="11150"/>
    <lineage>
        <taxon>Viruses</taxon>
        <taxon>Riboviria</taxon>
        <taxon>Orthornavirae</taxon>
        <taxon>Pisuviricota</taxon>
        <taxon>Pisoniviricetes</taxon>
        <taxon>Nidovirales</taxon>
        <taxon>Cornidovirineae</taxon>
        <taxon>Coronaviridae</taxon>
        <taxon>Orthocoronavirinae</taxon>
        <taxon>Alphacoronavirus</taxon>
        <taxon>Tegacovirus</taxon>
        <taxon>Alphacoronavirus 1</taxon>
    </lineage>
</organism>
<feature type="chain" id="PRO_0000106012" description="Nucleoprotein">
    <location>
        <begin position="1"/>
        <end position="382"/>
    </location>
</feature>
<feature type="domain" description="CoV N NTD" evidence="2">
    <location>
        <begin position="31"/>
        <end position="153"/>
    </location>
</feature>
<feature type="domain" description="CoV N CTD" evidence="3">
    <location>
        <begin position="224"/>
        <end position="337"/>
    </location>
</feature>
<feature type="region of interest" description="Disordered" evidence="4">
    <location>
        <begin position="1"/>
        <end position="29"/>
    </location>
</feature>
<feature type="region of interest" description="RNA-binding" evidence="1">
    <location>
        <begin position="33"/>
        <end position="159"/>
    </location>
</feature>
<feature type="region of interest" description="Disordered" evidence="4">
    <location>
        <begin position="150"/>
        <end position="240"/>
    </location>
</feature>
<feature type="region of interest" description="Dimerization" evidence="1">
    <location>
        <begin position="231"/>
        <end position="334"/>
    </location>
</feature>
<feature type="region of interest" description="Disordered" evidence="4">
    <location>
        <begin position="329"/>
        <end position="358"/>
    </location>
</feature>
<feature type="compositionally biased region" description="Basic residues" evidence="4">
    <location>
        <begin position="17"/>
        <end position="27"/>
    </location>
</feature>
<feature type="compositionally biased region" description="Low complexity" evidence="4">
    <location>
        <begin position="154"/>
        <end position="163"/>
    </location>
</feature>
<feature type="compositionally biased region" description="Basic residues" evidence="4">
    <location>
        <begin position="164"/>
        <end position="176"/>
    </location>
</feature>
<feature type="compositionally biased region" description="Basic and acidic residues" evidence="4">
    <location>
        <begin position="201"/>
        <end position="235"/>
    </location>
</feature>
<feature type="modified residue" description="Phosphoserine; by host" evidence="1">
    <location>
        <position position="9"/>
    </location>
</feature>
<feature type="modified residue" description="Phosphoserine; by host" evidence="1">
    <location>
        <position position="156"/>
    </location>
</feature>
<feature type="modified residue" description="Phosphoserine; by host" evidence="1">
    <location>
        <position position="254"/>
    </location>
</feature>
<feature type="modified residue" description="Phosphoserine; by host" evidence="1">
    <location>
        <position position="256"/>
    </location>
</feature>
<reference key="1">
    <citation type="journal article" date="1988" name="Mol. Microbiol.">
        <title>Sequence of the nucleoprotein gene from a virulent British field isolate of transmissible gastroenteritis virus and its expression in Saccharomyces cerevisiae.</title>
        <authorList>
            <person name="Britton P."/>
            <person name="Carmenes R.S."/>
            <person name="Page K.W."/>
            <person name="Garwes D.J."/>
            <person name="Parra F."/>
        </authorList>
    </citation>
    <scope>NUCLEOTIDE SEQUENCE [GENOMIC RNA]</scope>
</reference>
<reference key="2">
    <citation type="journal article" date="2001" name="J. Virol.">
        <title>Localization to the nucleolus is a common feature of coronavirus nucleoproteins, and the protein may disrupt host cell division.</title>
        <authorList>
            <person name="Wurm T."/>
            <person name="Chen H."/>
            <person name="Hodgson T."/>
            <person name="Britton P."/>
            <person name="Brooks G."/>
            <person name="Hiscox J.A."/>
        </authorList>
    </citation>
    <scope>SUBCELLULAR LOCATION</scope>
</reference>